<proteinExistence type="evidence at protein level"/>
<comment type="function">
    <text evidence="1 4 5 6">Microtubule-binding protein which regulates microtubule organization and stability (By similarity). Promotes the stability of astral microtubules and facilitates the proper orientation of the mitotic spindle (By similarity). This allows the oriented division of basal keratinocytes and contributes to epidermal stratification (PubMed:35197565). Required for the assembly of both primary and motile cilia (PubMed:35072334, PubMed:35301795). Destabilizes the interaction between CCP110 and CEP97 by competing with CEP97 for binding to CCP110 which promotes the removal of CCP110 and CEP97 from the mother centriole and allows the initiation of ciliogenesis (PubMed:35301795).</text>
</comment>
<comment type="subunit">
    <text evidence="1 6">Interacts with alpha-tubulin (By similarity). Interacts (via central region) with CCP110 (via N-terminal region); competes with CEP97 for binding to CCP110 (PubMed:35301795).</text>
</comment>
<comment type="subcellular location">
    <subcellularLocation>
        <location evidence="6">Cytoplasm</location>
        <location evidence="6">Cytoskeleton</location>
        <location evidence="6">Microtubule organizing center</location>
        <location evidence="6">Centrosome</location>
    </subcellularLocation>
    <subcellularLocation>
        <location evidence="6">Cytoplasm</location>
        <location evidence="6">Cytoskeleton</location>
        <location evidence="6">Microtubule organizing center</location>
        <location evidence="6">Centrosome</location>
        <location evidence="6">Centriole</location>
    </subcellularLocation>
    <subcellularLocation>
        <location evidence="6">Cytoplasm</location>
        <location evidence="6">Cytoskeleton</location>
        <location evidence="6">Cilium basal body</location>
    </subcellularLocation>
    <subcellularLocation>
        <location evidence="1">Cell projection</location>
        <location evidence="1">Cilium</location>
    </subcellularLocation>
    <subcellularLocation>
        <location evidence="1">Cytoplasm</location>
        <location evidence="1">Cytoskeleton</location>
        <location evidence="1">Spindle</location>
    </subcellularLocation>
    <subcellularLocation>
        <location evidence="1">Cytoplasm</location>
        <location evidence="1">Cytoskeleton</location>
        <location evidence="1">Spindle pole</location>
    </subcellularLocation>
    <subcellularLocation>
        <location evidence="1">Cytoplasm</location>
        <location evidence="1">Cytoskeleton</location>
        <location evidence="1">Cilium axoneme</location>
    </subcellularLocation>
    <text evidence="1">Localized at the centrosome and accumulates at the parental centrioles during centriole duplication in cycling cells (By similarity). In ciliated cells, detected at the basal body of the cilium (By similarity). Localizes to the centrosome during interphase, to the primary cilium at G0, to the spindle poles during mitosis and to the centrosomes and central spindle during telophase and cytokinesis (By similarity).</text>
</comment>
<comment type="tissue specificity">
    <text evidence="6">Widely expressed with highest levels in testis and lung.</text>
</comment>
<comment type="disruption phenotype">
    <text evidence="5 6">Severely impaired epidermal barrier function with a significant reduction in the thickness of the granular and spinous layers of the epidermis (PubMed:35197565). Misoriented division of basal keratinocytes and significantly reduced proliferation rate of basal keratinocytes and suprabasal cells (PubMed:35197565). Ciliogenesis defects in multiple organs (PubMed:35301795). Retinal photoreceptor cilia numbers are greatly decreased, leading to defective vision, and there is also a decreased number of renal primary cilia as well as a reduced percentage of ciliated cells in the tracheal epithelium (PubMed:35301795). Impaired cardiac function (PubMed:35301795). Males are fertile but a significant proportion of spermatozoa are aberrant with no tails (PubMed:35301795).</text>
</comment>
<protein>
    <recommendedName>
        <fullName>Enkurin domain-containing protein 1</fullName>
    </recommendedName>
</protein>
<evidence type="ECO:0000250" key="1">
    <source>
        <dbReference type="UniProtKB" id="Q9H0I2"/>
    </source>
</evidence>
<evidence type="ECO:0000255" key="2">
    <source>
        <dbReference type="PROSITE-ProRule" id="PRU01000"/>
    </source>
</evidence>
<evidence type="ECO:0000256" key="3">
    <source>
        <dbReference type="SAM" id="MobiDB-lite"/>
    </source>
</evidence>
<evidence type="ECO:0000269" key="4">
    <source>
    </source>
</evidence>
<evidence type="ECO:0000269" key="5">
    <source>
    </source>
</evidence>
<evidence type="ECO:0000269" key="6">
    <source>
    </source>
</evidence>
<evidence type="ECO:0007744" key="7">
    <source>
    </source>
</evidence>
<accession>Q7TSV9</accession>
<sequence length="346" mass="38967">MCEGPSRISGPIPPDPTLCPDYYRRPASAQGRLEGNALKLDLLTSGRDLDSSPPRGPRIRPEAREILERGQRGVGDVLLQLGCISLGSGVSPKRKNPKDHEKENLRRIKEIQRRFQDQERSREQGQPKPLKALWRSPKYDNVESRVKARMKELGPTSVTEPAHFLRAHSRCGPGLPPSRASSPQLALPGPQAKGPGLGVDFISRNALAAKRAPRRHSRSLQVLAQVQEQQRQAQERYNATQKGHVPHYLLERRDLWRKEAEARQRSQPDPSMPPGHTLMPENQRLETLNNLLQSQSQLLRELVLLPAGADSLRAQGHRAELDRKLVQIEEAIKIFSRPKVFVKMDT</sequence>
<feature type="chain" id="PRO_0000265932" description="Enkurin domain-containing protein 1">
    <location>
        <begin position="1"/>
        <end position="346"/>
    </location>
</feature>
<feature type="domain" description="Enkurin" evidence="2">
    <location>
        <begin position="251"/>
        <end position="343"/>
    </location>
</feature>
<feature type="region of interest" description="Disordered" evidence="3">
    <location>
        <begin position="1"/>
        <end position="24"/>
    </location>
</feature>
<feature type="region of interest" description="Disordered" evidence="3">
    <location>
        <begin position="88"/>
        <end position="107"/>
    </location>
</feature>
<feature type="region of interest" description="Disordered" evidence="3">
    <location>
        <begin position="113"/>
        <end position="132"/>
    </location>
</feature>
<feature type="region of interest" description="Disordered" evidence="3">
    <location>
        <begin position="259"/>
        <end position="280"/>
    </location>
</feature>
<feature type="compositionally biased region" description="Basic and acidic residues" evidence="3">
    <location>
        <begin position="98"/>
        <end position="107"/>
    </location>
</feature>
<feature type="compositionally biased region" description="Basic and acidic residues" evidence="3">
    <location>
        <begin position="113"/>
        <end position="125"/>
    </location>
</feature>
<feature type="modified residue" description="Phosphoserine" evidence="7">
    <location>
        <position position="91"/>
    </location>
</feature>
<feature type="modified residue" description="Phosphoserine" evidence="1">
    <location>
        <position position="136"/>
    </location>
</feature>
<organism>
    <name type="scientific">Mus musculus</name>
    <name type="common">Mouse</name>
    <dbReference type="NCBI Taxonomy" id="10090"/>
    <lineage>
        <taxon>Eukaryota</taxon>
        <taxon>Metazoa</taxon>
        <taxon>Chordata</taxon>
        <taxon>Craniata</taxon>
        <taxon>Vertebrata</taxon>
        <taxon>Euteleostomi</taxon>
        <taxon>Mammalia</taxon>
        <taxon>Eutheria</taxon>
        <taxon>Euarchontoglires</taxon>
        <taxon>Glires</taxon>
        <taxon>Rodentia</taxon>
        <taxon>Myomorpha</taxon>
        <taxon>Muroidea</taxon>
        <taxon>Muridae</taxon>
        <taxon>Murinae</taxon>
        <taxon>Mus</taxon>
        <taxon>Mus</taxon>
    </lineage>
</organism>
<keyword id="KW-0966">Cell projection</keyword>
<keyword id="KW-0970">Cilium biogenesis/degradation</keyword>
<keyword id="KW-0963">Cytoplasm</keyword>
<keyword id="KW-0206">Cytoskeleton</keyword>
<keyword id="KW-0493">Microtubule</keyword>
<keyword id="KW-0597">Phosphoprotein</keyword>
<keyword id="KW-1185">Reference proteome</keyword>
<dbReference type="EMBL" id="BC052498">
    <property type="protein sequence ID" value="AAH52498.1"/>
    <property type="molecule type" value="mRNA"/>
</dbReference>
<dbReference type="CCDS" id="CCDS22610.1"/>
<dbReference type="RefSeq" id="NP_938041.1">
    <property type="nucleotide sequence ID" value="NM_198299.2"/>
</dbReference>
<dbReference type="RefSeq" id="XP_006530606.1">
    <property type="nucleotide sequence ID" value="XM_006530543.2"/>
</dbReference>
<dbReference type="RefSeq" id="XP_006530607.1">
    <property type="nucleotide sequence ID" value="XM_006530544.2"/>
</dbReference>
<dbReference type="RefSeq" id="XP_036009598.1">
    <property type="nucleotide sequence ID" value="XM_036153705.1"/>
</dbReference>
<dbReference type="SMR" id="Q7TSV9"/>
<dbReference type="FunCoup" id="Q7TSV9">
    <property type="interactions" value="313"/>
</dbReference>
<dbReference type="STRING" id="10090.ENSMUSP00000013299"/>
<dbReference type="iPTMnet" id="Q7TSV9"/>
<dbReference type="PhosphoSitePlus" id="Q7TSV9"/>
<dbReference type="jPOST" id="Q7TSV9"/>
<dbReference type="PaxDb" id="10090-ENSMUSP00000013299"/>
<dbReference type="ProteomicsDB" id="275863"/>
<dbReference type="Antibodypedia" id="29606">
    <property type="antibodies" value="121 antibodies from 17 providers"/>
</dbReference>
<dbReference type="Ensembl" id="ENSMUST00000013299.11">
    <property type="protein sequence ID" value="ENSMUSP00000013299.10"/>
    <property type="gene ID" value="ENSMUSG00000013155.11"/>
</dbReference>
<dbReference type="GeneID" id="102124"/>
<dbReference type="KEGG" id="mmu:102124"/>
<dbReference type="UCSC" id="uc009ndy.1">
    <property type="organism name" value="mouse"/>
</dbReference>
<dbReference type="AGR" id="MGI:2142593"/>
<dbReference type="CTD" id="84080"/>
<dbReference type="MGI" id="MGI:2142593">
    <property type="gene designation" value="Enkd1"/>
</dbReference>
<dbReference type="VEuPathDB" id="HostDB:ENSMUSG00000013155"/>
<dbReference type="eggNOG" id="ENOG502QU1P">
    <property type="taxonomic scope" value="Eukaryota"/>
</dbReference>
<dbReference type="GeneTree" id="ENSGT00940000153866"/>
<dbReference type="HOGENOM" id="CLU_068901_0_0_1"/>
<dbReference type="InParanoid" id="Q7TSV9"/>
<dbReference type="OMA" id="DHWRKEA"/>
<dbReference type="OrthoDB" id="10264920at2759"/>
<dbReference type="PhylomeDB" id="Q7TSV9"/>
<dbReference type="TreeFam" id="TF328494"/>
<dbReference type="BioGRID-ORCS" id="102124">
    <property type="hits" value="1 hit in 61 CRISPR screens"/>
</dbReference>
<dbReference type="ChiTaRS" id="Enkd1">
    <property type="organism name" value="mouse"/>
</dbReference>
<dbReference type="PRO" id="PR:Q7TSV9"/>
<dbReference type="Proteomes" id="UP000000589">
    <property type="component" value="Chromosome 8"/>
</dbReference>
<dbReference type="RNAct" id="Q7TSV9">
    <property type="molecule type" value="protein"/>
</dbReference>
<dbReference type="Bgee" id="ENSMUSG00000013155">
    <property type="expression patterns" value="Expressed in spermatocyte and 139 other cell types or tissues"/>
</dbReference>
<dbReference type="ExpressionAtlas" id="Q7TSV9">
    <property type="expression patterns" value="baseline and differential"/>
</dbReference>
<dbReference type="GO" id="GO:0097731">
    <property type="term" value="C:9+0 non-motile cilium"/>
    <property type="evidence" value="ECO:0000314"/>
    <property type="project" value="MGI"/>
</dbReference>
<dbReference type="GO" id="GO:0005814">
    <property type="term" value="C:centriole"/>
    <property type="evidence" value="ECO:0000314"/>
    <property type="project" value="UniProtKB"/>
</dbReference>
<dbReference type="GO" id="GO:0005813">
    <property type="term" value="C:centrosome"/>
    <property type="evidence" value="ECO:0000314"/>
    <property type="project" value="UniProtKB"/>
</dbReference>
<dbReference type="GO" id="GO:0036064">
    <property type="term" value="C:ciliary basal body"/>
    <property type="evidence" value="ECO:0000314"/>
    <property type="project" value="UniProtKB"/>
</dbReference>
<dbReference type="GO" id="GO:0097546">
    <property type="term" value="C:ciliary base"/>
    <property type="evidence" value="ECO:0000314"/>
    <property type="project" value="MGI"/>
</dbReference>
<dbReference type="GO" id="GO:0005881">
    <property type="term" value="C:cytoplasmic microtubule"/>
    <property type="evidence" value="ECO:0000250"/>
    <property type="project" value="UniProtKB"/>
</dbReference>
<dbReference type="GO" id="GO:0005886">
    <property type="term" value="C:plasma membrane"/>
    <property type="evidence" value="ECO:0007669"/>
    <property type="project" value="Ensembl"/>
</dbReference>
<dbReference type="GO" id="GO:0000922">
    <property type="term" value="C:spindle pole"/>
    <property type="evidence" value="ECO:0007669"/>
    <property type="project" value="UniProtKB-SubCell"/>
</dbReference>
<dbReference type="GO" id="GO:0043014">
    <property type="term" value="F:alpha-tubulin binding"/>
    <property type="evidence" value="ECO:0000250"/>
    <property type="project" value="UniProtKB"/>
</dbReference>
<dbReference type="GO" id="GO:0008017">
    <property type="term" value="F:microtubule binding"/>
    <property type="evidence" value="ECO:0000250"/>
    <property type="project" value="UniProtKB"/>
</dbReference>
<dbReference type="GO" id="GO:0000132">
    <property type="term" value="P:establishment of mitotic spindle orientation"/>
    <property type="evidence" value="ECO:0000250"/>
    <property type="project" value="UniProtKB"/>
</dbReference>
<dbReference type="GO" id="GO:0044458">
    <property type="term" value="P:motile cilium assembly"/>
    <property type="evidence" value="ECO:0000315"/>
    <property type="project" value="UniProtKB"/>
</dbReference>
<dbReference type="GO" id="GO:1905515">
    <property type="term" value="P:non-motile cilium assembly"/>
    <property type="evidence" value="ECO:0000315"/>
    <property type="project" value="UniProtKB"/>
</dbReference>
<dbReference type="InterPro" id="IPR027012">
    <property type="entry name" value="Enkurin_dom"/>
</dbReference>
<dbReference type="InterPro" id="IPR052102">
    <property type="entry name" value="Enkurin_domain-protein"/>
</dbReference>
<dbReference type="PANTHER" id="PTHR21490:SF2">
    <property type="entry name" value="ENKURIN DOMAIN-CONTAINING PROTEIN 1"/>
    <property type="match status" value="1"/>
</dbReference>
<dbReference type="PANTHER" id="PTHR21490">
    <property type="entry name" value="ENKURIN-RELATED"/>
    <property type="match status" value="1"/>
</dbReference>
<dbReference type="Pfam" id="PF13864">
    <property type="entry name" value="Enkurin"/>
    <property type="match status" value="1"/>
</dbReference>
<dbReference type="PROSITE" id="PS51665">
    <property type="entry name" value="ENKURIN"/>
    <property type="match status" value="1"/>
</dbReference>
<name>ENKD1_MOUSE</name>
<reference key="1">
    <citation type="journal article" date="2004" name="Genome Res.">
        <title>The status, quality, and expansion of the NIH full-length cDNA project: the Mammalian Gene Collection (MGC).</title>
        <authorList>
            <consortium name="The MGC Project Team"/>
        </authorList>
    </citation>
    <scope>NUCLEOTIDE SEQUENCE [LARGE SCALE MRNA]</scope>
    <source>
        <strain>C57BL/6J</strain>
        <tissue>Mammary gland</tissue>
    </source>
</reference>
<reference key="2">
    <citation type="journal article" date="2010" name="Cell">
        <title>A tissue-specific atlas of mouse protein phosphorylation and expression.</title>
        <authorList>
            <person name="Huttlin E.L."/>
            <person name="Jedrychowski M.P."/>
            <person name="Elias J.E."/>
            <person name="Goswami T."/>
            <person name="Rad R."/>
            <person name="Beausoleil S.A."/>
            <person name="Villen J."/>
            <person name="Haas W."/>
            <person name="Sowa M.E."/>
            <person name="Gygi S.P."/>
        </authorList>
    </citation>
    <scope>PHOSPHORYLATION [LARGE SCALE ANALYSIS] AT SER-91</scope>
    <scope>IDENTIFICATION BY MASS SPECTROMETRY [LARGE SCALE ANALYSIS]</scope>
    <source>
        <tissue>Testis</tissue>
    </source>
</reference>
<reference key="3">
    <citation type="journal article" date="2022" name="Cell Death Differ.">
        <title>ENKD1 promotes epidermal stratification by regulating spindle orientation in basal keratinocytes.</title>
        <authorList>
            <person name="Zhong T."/>
            <person name="Wu X."/>
            <person name="Xie W."/>
            <person name="Luo X."/>
            <person name="Song T."/>
            <person name="Sun S."/>
            <person name="Luo Y."/>
            <person name="Li D."/>
            <person name="Liu M."/>
            <person name="Xie S."/>
            <person name="Zhou J."/>
        </authorList>
    </citation>
    <scope>FUNCTION</scope>
    <scope>DISRUPTION PHENOTYPE</scope>
</reference>
<reference key="4">
    <citation type="journal article" date="2022" name="EMBO Rep.">
        <title>ENKD1 promotes CP110 removal through competing with CEP97 to initiate ciliogenesis.</title>
        <authorList>
            <person name="Song T."/>
            <person name="Yang Y."/>
            <person name="Zhou P."/>
            <person name="Ran J."/>
            <person name="Zhang L."/>
            <person name="Wu X."/>
            <person name="Xie W."/>
            <person name="Zhong T."/>
            <person name="Liu H."/>
            <person name="Liu M."/>
            <person name="Li D."/>
            <person name="Zhao H."/>
            <person name="Zhou J."/>
        </authorList>
    </citation>
    <scope>FUNCTION</scope>
    <scope>INTERACTION WITH CCP110</scope>
    <scope>SUBCELLULAR LOCATION</scope>
    <scope>TISSUE SPECIFICITY</scope>
    <scope>DISRUPTION PHENOTYPE</scope>
</reference>
<reference key="5">
    <citation type="journal article" date="2022" name="FEBS J.">
        <title>ENKD1 is a centrosomal and ciliary microtubule-associated protein important for primary cilium content regulation.</title>
        <authorList>
            <person name="Tiryaki F."/>
            <person name="Deretic J."/>
            <person name="Firat-Karalar E.N."/>
        </authorList>
    </citation>
    <scope>FUNCTION</scope>
    <scope>SUBCELLULAR LOCATION</scope>
</reference>
<gene>
    <name type="primary">Enkd1</name>
</gene>